<name>CMOB_SACD2</name>
<gene>
    <name evidence="1" type="primary">cmoB</name>
    <name type="ordered locus">Sde_1852</name>
</gene>
<dbReference type="EC" id="2.5.1.-" evidence="1"/>
<dbReference type="EMBL" id="CP000282">
    <property type="protein sequence ID" value="ABD81112.1"/>
    <property type="molecule type" value="Genomic_DNA"/>
</dbReference>
<dbReference type="RefSeq" id="WP_011468330.1">
    <property type="nucleotide sequence ID" value="NC_007912.1"/>
</dbReference>
<dbReference type="SMR" id="Q21JL7"/>
<dbReference type="STRING" id="203122.Sde_1852"/>
<dbReference type="GeneID" id="98613527"/>
<dbReference type="KEGG" id="sde:Sde_1852"/>
<dbReference type="eggNOG" id="COG0500">
    <property type="taxonomic scope" value="Bacteria"/>
</dbReference>
<dbReference type="HOGENOM" id="CLU_052665_0_0_6"/>
<dbReference type="OrthoDB" id="9773188at2"/>
<dbReference type="Proteomes" id="UP000001947">
    <property type="component" value="Chromosome"/>
</dbReference>
<dbReference type="GO" id="GO:0008168">
    <property type="term" value="F:methyltransferase activity"/>
    <property type="evidence" value="ECO:0007669"/>
    <property type="project" value="TreeGrafter"/>
</dbReference>
<dbReference type="GO" id="GO:0016765">
    <property type="term" value="F:transferase activity, transferring alkyl or aryl (other than methyl) groups"/>
    <property type="evidence" value="ECO:0007669"/>
    <property type="project" value="UniProtKB-UniRule"/>
</dbReference>
<dbReference type="GO" id="GO:0002098">
    <property type="term" value="P:tRNA wobble uridine modification"/>
    <property type="evidence" value="ECO:0007669"/>
    <property type="project" value="InterPro"/>
</dbReference>
<dbReference type="CDD" id="cd02440">
    <property type="entry name" value="AdoMet_MTases"/>
    <property type="match status" value="1"/>
</dbReference>
<dbReference type="Gene3D" id="3.40.50.150">
    <property type="entry name" value="Vaccinia Virus protein VP39"/>
    <property type="match status" value="1"/>
</dbReference>
<dbReference type="HAMAP" id="MF_01590">
    <property type="entry name" value="tRNA_carboxymethyltr_CmoB"/>
    <property type="match status" value="1"/>
</dbReference>
<dbReference type="InterPro" id="IPR010017">
    <property type="entry name" value="CmoB"/>
</dbReference>
<dbReference type="InterPro" id="IPR027555">
    <property type="entry name" value="Mo5U34_MeTrfas-like"/>
</dbReference>
<dbReference type="InterPro" id="IPR029063">
    <property type="entry name" value="SAM-dependent_MTases_sf"/>
</dbReference>
<dbReference type="NCBIfam" id="NF011650">
    <property type="entry name" value="PRK15068.1"/>
    <property type="match status" value="1"/>
</dbReference>
<dbReference type="NCBIfam" id="TIGR00452">
    <property type="entry name" value="tRNA 5-methoxyuridine(34)/uridine 5-oxyacetic acid(34) synthase CmoB"/>
    <property type="match status" value="1"/>
</dbReference>
<dbReference type="PANTHER" id="PTHR43464">
    <property type="entry name" value="METHYLTRANSFERASE"/>
    <property type="match status" value="1"/>
</dbReference>
<dbReference type="PANTHER" id="PTHR43464:SF95">
    <property type="entry name" value="TRNA U34 CARBOXYMETHYLTRANSFERASE"/>
    <property type="match status" value="1"/>
</dbReference>
<dbReference type="Pfam" id="PF08003">
    <property type="entry name" value="Methyltransf_9"/>
    <property type="match status" value="1"/>
</dbReference>
<dbReference type="SUPFAM" id="SSF53335">
    <property type="entry name" value="S-adenosyl-L-methionine-dependent methyltransferases"/>
    <property type="match status" value="1"/>
</dbReference>
<keyword id="KW-1185">Reference proteome</keyword>
<keyword id="KW-0808">Transferase</keyword>
<keyword id="KW-0819">tRNA processing</keyword>
<comment type="function">
    <text evidence="1">Catalyzes carboxymethyl transfer from carboxy-S-adenosyl-L-methionine (Cx-SAM) to 5-hydroxyuridine (ho5U) to form 5-carboxymethoxyuridine (cmo5U) at position 34 in tRNAs.</text>
</comment>
<comment type="catalytic activity">
    <reaction evidence="1">
        <text>carboxy-S-adenosyl-L-methionine + 5-hydroxyuridine(34) in tRNA = 5-carboxymethoxyuridine(34) in tRNA + S-adenosyl-L-homocysteine + H(+)</text>
        <dbReference type="Rhea" id="RHEA:52848"/>
        <dbReference type="Rhea" id="RHEA-COMP:13381"/>
        <dbReference type="Rhea" id="RHEA-COMP:13383"/>
        <dbReference type="ChEBI" id="CHEBI:15378"/>
        <dbReference type="ChEBI" id="CHEBI:57856"/>
        <dbReference type="ChEBI" id="CHEBI:134278"/>
        <dbReference type="ChEBI" id="CHEBI:136877"/>
        <dbReference type="ChEBI" id="CHEBI:136879"/>
    </reaction>
</comment>
<comment type="subunit">
    <text evidence="1">Homotetramer.</text>
</comment>
<comment type="similarity">
    <text evidence="1">Belongs to the class I-like SAM-binding methyltransferase superfamily. CmoB family.</text>
</comment>
<reference key="1">
    <citation type="journal article" date="2008" name="PLoS Genet.">
        <title>Complete genome sequence of the complex carbohydrate-degrading marine bacterium, Saccharophagus degradans strain 2-40 T.</title>
        <authorList>
            <person name="Weiner R.M."/>
            <person name="Taylor L.E. II"/>
            <person name="Henrissat B."/>
            <person name="Hauser L."/>
            <person name="Land M."/>
            <person name="Coutinho P.M."/>
            <person name="Rancurel C."/>
            <person name="Saunders E.H."/>
            <person name="Longmire A.G."/>
            <person name="Zhang H."/>
            <person name="Bayer E.A."/>
            <person name="Gilbert H.J."/>
            <person name="Larimer F."/>
            <person name="Zhulin I.B."/>
            <person name="Ekborg N.A."/>
            <person name="Lamed R."/>
            <person name="Richardson P.M."/>
            <person name="Borovok I."/>
            <person name="Hutcheson S."/>
        </authorList>
    </citation>
    <scope>NUCLEOTIDE SEQUENCE [LARGE SCALE GENOMIC DNA]</scope>
    <source>
        <strain>2-40 / ATCC 43961 / DSM 17024</strain>
    </source>
</reference>
<organism>
    <name type="scientific">Saccharophagus degradans (strain 2-40 / ATCC 43961 / DSM 17024)</name>
    <dbReference type="NCBI Taxonomy" id="203122"/>
    <lineage>
        <taxon>Bacteria</taxon>
        <taxon>Pseudomonadati</taxon>
        <taxon>Pseudomonadota</taxon>
        <taxon>Gammaproteobacteria</taxon>
        <taxon>Cellvibrionales</taxon>
        <taxon>Cellvibrionaceae</taxon>
        <taxon>Saccharophagus</taxon>
    </lineage>
</organism>
<proteinExistence type="inferred from homology"/>
<protein>
    <recommendedName>
        <fullName evidence="1">tRNA U34 carboxymethyltransferase</fullName>
        <ecNumber evidence="1">2.5.1.-</ecNumber>
    </recommendedName>
</protein>
<accession>Q21JL7</accession>
<sequence length="325" mass="36933">MIDYTSFLEQEKEGPLARWVEILPDQISEGLSTKRYGDLEQWLTAMQNLPQVDNVQVSYQSAVTLKSTAPLAQETHTLIEQQFRALIPWRKGPYNIFDIEIDTEWHSDWKWDRVLPHLAPLKHRKILDVGCGNGYHCWRMYGEGASQVIGIDPSPRFVVQFYMLKHFIGSNAPVDLLPVPMEAVPANLQAFDTTFSMGVLYHRRSPMDHLRELKATLRPGGQLVLETLVIEGKLGEVLVPEGRYAMMNNVWFLPSVPTLISWLTKCGFKNARCVDVNQTSTDEQRSTEWMTFQSLSDFLDPNDPTLTAEGHPAPLRAVILAEAPE</sequence>
<feature type="chain" id="PRO_0000313958" description="tRNA U34 carboxymethyltransferase">
    <location>
        <begin position="1"/>
        <end position="325"/>
    </location>
</feature>
<feature type="binding site" evidence="1">
    <location>
        <position position="91"/>
    </location>
    <ligand>
        <name>carboxy-S-adenosyl-L-methionine</name>
        <dbReference type="ChEBI" id="CHEBI:134278"/>
    </ligand>
</feature>
<feature type="binding site" evidence="1">
    <location>
        <position position="105"/>
    </location>
    <ligand>
        <name>carboxy-S-adenosyl-L-methionine</name>
        <dbReference type="ChEBI" id="CHEBI:134278"/>
    </ligand>
</feature>
<feature type="binding site" evidence="1">
    <location>
        <position position="110"/>
    </location>
    <ligand>
        <name>carboxy-S-adenosyl-L-methionine</name>
        <dbReference type="ChEBI" id="CHEBI:134278"/>
    </ligand>
</feature>
<feature type="binding site" evidence="1">
    <location>
        <position position="130"/>
    </location>
    <ligand>
        <name>carboxy-S-adenosyl-L-methionine</name>
        <dbReference type="ChEBI" id="CHEBI:134278"/>
    </ligand>
</feature>
<feature type="binding site" evidence="1">
    <location>
        <begin position="152"/>
        <end position="154"/>
    </location>
    <ligand>
        <name>carboxy-S-adenosyl-L-methionine</name>
        <dbReference type="ChEBI" id="CHEBI:134278"/>
    </ligand>
</feature>
<feature type="binding site" evidence="1">
    <location>
        <begin position="181"/>
        <end position="182"/>
    </location>
    <ligand>
        <name>carboxy-S-adenosyl-L-methionine</name>
        <dbReference type="ChEBI" id="CHEBI:134278"/>
    </ligand>
</feature>
<feature type="binding site" evidence="1">
    <location>
        <position position="197"/>
    </location>
    <ligand>
        <name>carboxy-S-adenosyl-L-methionine</name>
        <dbReference type="ChEBI" id="CHEBI:134278"/>
    </ligand>
</feature>
<feature type="binding site" evidence="1">
    <location>
        <position position="201"/>
    </location>
    <ligand>
        <name>carboxy-S-adenosyl-L-methionine</name>
        <dbReference type="ChEBI" id="CHEBI:134278"/>
    </ligand>
</feature>
<feature type="binding site" evidence="1">
    <location>
        <position position="316"/>
    </location>
    <ligand>
        <name>carboxy-S-adenosyl-L-methionine</name>
        <dbReference type="ChEBI" id="CHEBI:134278"/>
    </ligand>
</feature>
<evidence type="ECO:0000255" key="1">
    <source>
        <dbReference type="HAMAP-Rule" id="MF_01590"/>
    </source>
</evidence>